<protein>
    <recommendedName>
        <fullName>Thymosin beta-15A</fullName>
    </recommendedName>
    <alternativeName>
        <fullName>NB thymosin beta</fullName>
    </alternativeName>
    <alternativeName>
        <fullName>Thymosin-like protein 8</fullName>
    </alternativeName>
</protein>
<keyword id="KW-0009">Actin-binding</keyword>
<keyword id="KW-0963">Cytoplasm</keyword>
<keyword id="KW-0206">Cytoskeleton</keyword>
<keyword id="KW-0903">Direct protein sequencing</keyword>
<keyword id="KW-1185">Reference proteome</keyword>
<feature type="initiator methionine" description="Removed" evidence="3">
    <location>
        <position position="1"/>
    </location>
</feature>
<feature type="chain" id="PRO_0000185159" description="Thymosin beta-15A">
    <location>
        <begin position="2"/>
        <end position="45"/>
    </location>
</feature>
<feature type="region of interest" description="Disordered" evidence="2">
    <location>
        <begin position="1"/>
        <end position="45"/>
    </location>
</feature>
<feature type="compositionally biased region" description="Basic and acidic residues" evidence="2">
    <location>
        <begin position="1"/>
        <end position="27"/>
    </location>
</feature>
<feature type="compositionally biased region" description="Basic and acidic residues" evidence="2">
    <location>
        <begin position="35"/>
        <end position="45"/>
    </location>
</feature>
<organism>
    <name type="scientific">Homo sapiens</name>
    <name type="common">Human</name>
    <dbReference type="NCBI Taxonomy" id="9606"/>
    <lineage>
        <taxon>Eukaryota</taxon>
        <taxon>Metazoa</taxon>
        <taxon>Chordata</taxon>
        <taxon>Craniata</taxon>
        <taxon>Vertebrata</taxon>
        <taxon>Euteleostomi</taxon>
        <taxon>Mammalia</taxon>
        <taxon>Eutheria</taxon>
        <taxon>Euarchontoglires</taxon>
        <taxon>Primates</taxon>
        <taxon>Haplorrhini</taxon>
        <taxon>Catarrhini</taxon>
        <taxon>Hominidae</taxon>
        <taxon>Homo</taxon>
    </lineage>
</organism>
<reference key="1">
    <citation type="journal article" date="1996" name="DNA Res.">
        <title>Identification and cloning of neuroblastoma-specific and nerve tissue-specific genes through compiled expression profiles.</title>
        <authorList>
            <person name="Yokoyama M."/>
            <person name="Nishi Y."/>
            <person name="Yoshii J."/>
            <person name="Okubo K."/>
            <person name="Matsubara K."/>
        </authorList>
    </citation>
    <scope>NUCLEOTIDE SEQUENCE [MRNA]</scope>
    <scope>TISSUE SPECIFICITY</scope>
</reference>
<reference key="2">
    <citation type="journal article" date="2005" name="Nature">
        <title>The DNA sequence of the human X chromosome.</title>
        <authorList>
            <person name="Ross M.T."/>
            <person name="Grafham D.V."/>
            <person name="Coffey A.J."/>
            <person name="Scherer S."/>
            <person name="McLay K."/>
            <person name="Muzny D."/>
            <person name="Platzer M."/>
            <person name="Howell G.R."/>
            <person name="Burrows C."/>
            <person name="Bird C.P."/>
            <person name="Frankish A."/>
            <person name="Lovell F.L."/>
            <person name="Howe K.L."/>
            <person name="Ashurst J.L."/>
            <person name="Fulton R.S."/>
            <person name="Sudbrak R."/>
            <person name="Wen G."/>
            <person name="Jones M.C."/>
            <person name="Hurles M.E."/>
            <person name="Andrews T.D."/>
            <person name="Scott C.E."/>
            <person name="Searle S."/>
            <person name="Ramser J."/>
            <person name="Whittaker A."/>
            <person name="Deadman R."/>
            <person name="Carter N.P."/>
            <person name="Hunt S.E."/>
            <person name="Chen R."/>
            <person name="Cree A."/>
            <person name="Gunaratne P."/>
            <person name="Havlak P."/>
            <person name="Hodgson A."/>
            <person name="Metzker M.L."/>
            <person name="Richards S."/>
            <person name="Scott G."/>
            <person name="Steffen D."/>
            <person name="Sodergren E."/>
            <person name="Wheeler D.A."/>
            <person name="Worley K.C."/>
            <person name="Ainscough R."/>
            <person name="Ambrose K.D."/>
            <person name="Ansari-Lari M.A."/>
            <person name="Aradhya S."/>
            <person name="Ashwell R.I."/>
            <person name="Babbage A.K."/>
            <person name="Bagguley C.L."/>
            <person name="Ballabio A."/>
            <person name="Banerjee R."/>
            <person name="Barker G.E."/>
            <person name="Barlow K.F."/>
            <person name="Barrett I.P."/>
            <person name="Bates K.N."/>
            <person name="Beare D.M."/>
            <person name="Beasley H."/>
            <person name="Beasley O."/>
            <person name="Beck A."/>
            <person name="Bethel G."/>
            <person name="Blechschmidt K."/>
            <person name="Brady N."/>
            <person name="Bray-Allen S."/>
            <person name="Bridgeman A.M."/>
            <person name="Brown A.J."/>
            <person name="Brown M.J."/>
            <person name="Bonnin D."/>
            <person name="Bruford E.A."/>
            <person name="Buhay C."/>
            <person name="Burch P."/>
            <person name="Burford D."/>
            <person name="Burgess J."/>
            <person name="Burrill W."/>
            <person name="Burton J."/>
            <person name="Bye J.M."/>
            <person name="Carder C."/>
            <person name="Carrel L."/>
            <person name="Chako J."/>
            <person name="Chapman J.C."/>
            <person name="Chavez D."/>
            <person name="Chen E."/>
            <person name="Chen G."/>
            <person name="Chen Y."/>
            <person name="Chen Z."/>
            <person name="Chinault C."/>
            <person name="Ciccodicola A."/>
            <person name="Clark S.Y."/>
            <person name="Clarke G."/>
            <person name="Clee C.M."/>
            <person name="Clegg S."/>
            <person name="Clerc-Blankenburg K."/>
            <person name="Clifford K."/>
            <person name="Cobley V."/>
            <person name="Cole C.G."/>
            <person name="Conquer J.S."/>
            <person name="Corby N."/>
            <person name="Connor R.E."/>
            <person name="David R."/>
            <person name="Davies J."/>
            <person name="Davis C."/>
            <person name="Davis J."/>
            <person name="Delgado O."/>
            <person name="Deshazo D."/>
            <person name="Dhami P."/>
            <person name="Ding Y."/>
            <person name="Dinh H."/>
            <person name="Dodsworth S."/>
            <person name="Draper H."/>
            <person name="Dugan-Rocha S."/>
            <person name="Dunham A."/>
            <person name="Dunn M."/>
            <person name="Durbin K.J."/>
            <person name="Dutta I."/>
            <person name="Eades T."/>
            <person name="Ellwood M."/>
            <person name="Emery-Cohen A."/>
            <person name="Errington H."/>
            <person name="Evans K.L."/>
            <person name="Faulkner L."/>
            <person name="Francis F."/>
            <person name="Frankland J."/>
            <person name="Fraser A.E."/>
            <person name="Galgoczy P."/>
            <person name="Gilbert J."/>
            <person name="Gill R."/>
            <person name="Gloeckner G."/>
            <person name="Gregory S.G."/>
            <person name="Gribble S."/>
            <person name="Griffiths C."/>
            <person name="Grocock R."/>
            <person name="Gu Y."/>
            <person name="Gwilliam R."/>
            <person name="Hamilton C."/>
            <person name="Hart E.A."/>
            <person name="Hawes A."/>
            <person name="Heath P.D."/>
            <person name="Heitmann K."/>
            <person name="Hennig S."/>
            <person name="Hernandez J."/>
            <person name="Hinzmann B."/>
            <person name="Ho S."/>
            <person name="Hoffs M."/>
            <person name="Howden P.J."/>
            <person name="Huckle E.J."/>
            <person name="Hume J."/>
            <person name="Hunt P.J."/>
            <person name="Hunt A.R."/>
            <person name="Isherwood J."/>
            <person name="Jacob L."/>
            <person name="Johnson D."/>
            <person name="Jones S."/>
            <person name="de Jong P.J."/>
            <person name="Joseph S.S."/>
            <person name="Keenan S."/>
            <person name="Kelly S."/>
            <person name="Kershaw J.K."/>
            <person name="Khan Z."/>
            <person name="Kioschis P."/>
            <person name="Klages S."/>
            <person name="Knights A.J."/>
            <person name="Kosiura A."/>
            <person name="Kovar-Smith C."/>
            <person name="Laird G.K."/>
            <person name="Langford C."/>
            <person name="Lawlor S."/>
            <person name="Leversha M."/>
            <person name="Lewis L."/>
            <person name="Liu W."/>
            <person name="Lloyd C."/>
            <person name="Lloyd D.M."/>
            <person name="Loulseged H."/>
            <person name="Loveland J.E."/>
            <person name="Lovell J.D."/>
            <person name="Lozado R."/>
            <person name="Lu J."/>
            <person name="Lyne R."/>
            <person name="Ma J."/>
            <person name="Maheshwari M."/>
            <person name="Matthews L.H."/>
            <person name="McDowall J."/>
            <person name="McLaren S."/>
            <person name="McMurray A."/>
            <person name="Meidl P."/>
            <person name="Meitinger T."/>
            <person name="Milne S."/>
            <person name="Miner G."/>
            <person name="Mistry S.L."/>
            <person name="Morgan M."/>
            <person name="Morris S."/>
            <person name="Mueller I."/>
            <person name="Mullikin J.C."/>
            <person name="Nguyen N."/>
            <person name="Nordsiek G."/>
            <person name="Nyakatura G."/>
            <person name="O'dell C.N."/>
            <person name="Okwuonu G."/>
            <person name="Palmer S."/>
            <person name="Pandian R."/>
            <person name="Parker D."/>
            <person name="Parrish J."/>
            <person name="Pasternak S."/>
            <person name="Patel D."/>
            <person name="Pearce A.V."/>
            <person name="Pearson D.M."/>
            <person name="Pelan S.E."/>
            <person name="Perez L."/>
            <person name="Porter K.M."/>
            <person name="Ramsey Y."/>
            <person name="Reichwald K."/>
            <person name="Rhodes S."/>
            <person name="Ridler K.A."/>
            <person name="Schlessinger D."/>
            <person name="Schueler M.G."/>
            <person name="Sehra H.K."/>
            <person name="Shaw-Smith C."/>
            <person name="Shen H."/>
            <person name="Sheridan E.M."/>
            <person name="Shownkeen R."/>
            <person name="Skuce C.D."/>
            <person name="Smith M.L."/>
            <person name="Sotheran E.C."/>
            <person name="Steingruber H.E."/>
            <person name="Steward C.A."/>
            <person name="Storey R."/>
            <person name="Swann R.M."/>
            <person name="Swarbreck D."/>
            <person name="Tabor P.E."/>
            <person name="Taudien S."/>
            <person name="Taylor T."/>
            <person name="Teague B."/>
            <person name="Thomas K."/>
            <person name="Thorpe A."/>
            <person name="Timms K."/>
            <person name="Tracey A."/>
            <person name="Trevanion S."/>
            <person name="Tromans A.C."/>
            <person name="d'Urso M."/>
            <person name="Verduzco D."/>
            <person name="Villasana D."/>
            <person name="Waldron L."/>
            <person name="Wall M."/>
            <person name="Wang Q."/>
            <person name="Warren J."/>
            <person name="Warry G.L."/>
            <person name="Wei X."/>
            <person name="West A."/>
            <person name="Whitehead S.L."/>
            <person name="Whiteley M.N."/>
            <person name="Wilkinson J.E."/>
            <person name="Willey D.L."/>
            <person name="Williams G."/>
            <person name="Williams L."/>
            <person name="Williamson A."/>
            <person name="Williamson H."/>
            <person name="Wilming L."/>
            <person name="Woodmansey R.L."/>
            <person name="Wray P.W."/>
            <person name="Yen J."/>
            <person name="Zhang J."/>
            <person name="Zhou J."/>
            <person name="Zoghbi H."/>
            <person name="Zorilla S."/>
            <person name="Buck D."/>
            <person name="Reinhardt R."/>
            <person name="Poustka A."/>
            <person name="Rosenthal A."/>
            <person name="Lehrach H."/>
            <person name="Meindl A."/>
            <person name="Minx P.J."/>
            <person name="Hillier L.W."/>
            <person name="Willard H.F."/>
            <person name="Wilson R.K."/>
            <person name="Waterston R.H."/>
            <person name="Rice C.M."/>
            <person name="Vaudin M."/>
            <person name="Coulson A."/>
            <person name="Nelson D.L."/>
            <person name="Weinstock G."/>
            <person name="Sulston J.E."/>
            <person name="Durbin R.M."/>
            <person name="Hubbard T."/>
            <person name="Gibbs R.A."/>
            <person name="Beck S."/>
            <person name="Rogers J."/>
            <person name="Bentley D.R."/>
        </authorList>
    </citation>
    <scope>NUCLEOTIDE SEQUENCE [LARGE SCALE GENOMIC DNA]</scope>
</reference>
<reference key="3">
    <citation type="submission" date="2005-09" db="EMBL/GenBank/DDBJ databases">
        <authorList>
            <person name="Mural R.J."/>
            <person name="Istrail S."/>
            <person name="Sutton G.G."/>
            <person name="Florea L."/>
            <person name="Halpern A.L."/>
            <person name="Mobarry C.M."/>
            <person name="Lippert R."/>
            <person name="Walenz B."/>
            <person name="Shatkay H."/>
            <person name="Dew I."/>
            <person name="Miller J.R."/>
            <person name="Flanigan M.J."/>
            <person name="Edwards N.J."/>
            <person name="Bolanos R."/>
            <person name="Fasulo D."/>
            <person name="Halldorsson B.V."/>
            <person name="Hannenhalli S."/>
            <person name="Turner R."/>
            <person name="Yooseph S."/>
            <person name="Lu F."/>
            <person name="Nusskern D.R."/>
            <person name="Shue B.C."/>
            <person name="Zheng X.H."/>
            <person name="Zhong F."/>
            <person name="Delcher A.L."/>
            <person name="Huson D.H."/>
            <person name="Kravitz S.A."/>
            <person name="Mouchard L."/>
            <person name="Reinert K."/>
            <person name="Remington K.A."/>
            <person name="Clark A.G."/>
            <person name="Waterman M.S."/>
            <person name="Eichler E.E."/>
            <person name="Adams M.D."/>
            <person name="Hunkapiller M.W."/>
            <person name="Myers E.W."/>
            <person name="Venter J.C."/>
        </authorList>
    </citation>
    <scope>NUCLEOTIDE SEQUENCE [LARGE SCALE GENOMIC DNA]</scope>
</reference>
<reference key="4">
    <citation type="journal article" date="2004" name="Genome Res.">
        <title>The status, quality, and expansion of the NIH full-length cDNA project: the Mammalian Gene Collection (MGC).</title>
        <authorList>
            <consortium name="The MGC Project Team"/>
        </authorList>
    </citation>
    <scope>NUCLEOTIDE SEQUENCE [LARGE SCALE MRNA]</scope>
    <source>
        <tissue>Eye</tissue>
    </source>
</reference>
<reference key="5">
    <citation type="journal article" date="2003" name="Nat. Biotechnol.">
        <title>Exploring proteomes and analyzing protein processing by mass spectrometric identification of sorted N-terminal peptides.</title>
        <authorList>
            <person name="Gevaert K."/>
            <person name="Goethals M."/>
            <person name="Martens L."/>
            <person name="Van Damme J."/>
            <person name="Staes A."/>
            <person name="Thomas G.R."/>
            <person name="Vandekerckhove J."/>
        </authorList>
    </citation>
    <scope>PROTEIN SEQUENCE OF 2-15</scope>
    <source>
        <tissue>Platelet</tissue>
    </source>
</reference>
<reference key="6">
    <citation type="journal article" date="2009" name="Genes Chromosomes Cancer">
        <title>Differential regulation of human thymosin beta 15 isoforms by transforming growth factor beta 1.</title>
        <authorList>
            <person name="Banyard J."/>
            <person name="Barrows C."/>
            <person name="Zetter B.R."/>
        </authorList>
    </citation>
    <scope>INDUCTION</scope>
</reference>
<sequence length="45" mass="5229">MSDKPDLSEVEKFDRSKLKKTNTEEKNTLPSKETIQQEKECVQTS</sequence>
<comment type="function">
    <text evidence="1">Plays an important role in the organization of the cytoskeleton. Binds to and sequesters actin monomers (G actin) and therefore inhibits actin polymerization.</text>
</comment>
<comment type="subcellular location">
    <subcellularLocation>
        <location evidence="1">Cytoplasm</location>
        <location evidence="1">Cytoskeleton</location>
    </subcellularLocation>
</comment>
<comment type="tissue specificity">
    <text evidence="5">Neuroblastoma-specific.</text>
</comment>
<comment type="induction">
    <text evidence="4">Down-regulated by TGFB1.</text>
</comment>
<comment type="similarity">
    <text evidence="6">Belongs to the thymosin beta family.</text>
</comment>
<dbReference type="EMBL" id="D82345">
    <property type="protein sequence ID" value="BAA11556.1"/>
    <property type="molecule type" value="mRNA"/>
</dbReference>
<dbReference type="EMBL" id="AL035609">
    <property type="status" value="NOT_ANNOTATED_CDS"/>
    <property type="molecule type" value="Genomic_DNA"/>
</dbReference>
<dbReference type="EMBL" id="CH471190">
    <property type="protein sequence ID" value="EAW54739.1"/>
    <property type="molecule type" value="Genomic_DNA"/>
</dbReference>
<dbReference type="EMBL" id="BC000183">
    <property type="protein sequence ID" value="AAH00183.1"/>
    <property type="molecule type" value="mRNA"/>
</dbReference>
<dbReference type="CCDS" id="CCDS14498.1"/>
<dbReference type="PIR" id="JC5274">
    <property type="entry name" value="JC5274"/>
</dbReference>
<dbReference type="RefSeq" id="NP_068832.1">
    <property type="nucleotide sequence ID" value="NM_021992.3"/>
</dbReference>
<dbReference type="RefSeq" id="NP_919305.2">
    <property type="nucleotide sequence ID" value="NM_194324.2"/>
</dbReference>
<dbReference type="SMR" id="P0CG34"/>
<dbReference type="BioGRID" id="116203">
    <property type="interactions" value="1"/>
</dbReference>
<dbReference type="BioGRID" id="130400">
    <property type="interactions" value="1"/>
</dbReference>
<dbReference type="FunCoup" id="P0CG34">
    <property type="interactions" value="353"/>
</dbReference>
<dbReference type="STRING" id="9606.ENSP00000289373"/>
<dbReference type="iPTMnet" id="P0CG34"/>
<dbReference type="PhosphoSitePlus" id="P0CG34"/>
<dbReference type="BioMuta" id="TMSB15A"/>
<dbReference type="DMDM" id="300681171"/>
<dbReference type="jPOST" id="P0CG34"/>
<dbReference type="MassIVE" id="P0CG34"/>
<dbReference type="PaxDb" id="9606-ENSP00000289373"/>
<dbReference type="PeptideAtlas" id="P0CG34"/>
<dbReference type="Pumba" id="P0CG34"/>
<dbReference type="Antibodypedia" id="28923">
    <property type="antibodies" value="48 antibodies from 16 providers"/>
</dbReference>
<dbReference type="DNASU" id="286527"/>
<dbReference type="Ensembl" id="ENST00000289373.5">
    <property type="protein sequence ID" value="ENSP00000289373.4"/>
    <property type="gene ID" value="ENSG00000158164.7"/>
</dbReference>
<dbReference type="GeneID" id="11013"/>
<dbReference type="GeneID" id="286527"/>
<dbReference type="KEGG" id="hsa:11013"/>
<dbReference type="KEGG" id="hsa:286527"/>
<dbReference type="MANE-Select" id="ENST00000289373.5">
    <property type="protein sequence ID" value="ENSP00000289373.4"/>
    <property type="RefSeq nucleotide sequence ID" value="NM_021992.3"/>
    <property type="RefSeq protein sequence ID" value="NP_068832.1"/>
</dbReference>
<dbReference type="AGR" id="HGNC:28612"/>
<dbReference type="AGR" id="HGNC:30744"/>
<dbReference type="AGR" id="HGNC:55173"/>
<dbReference type="CTD" id="11013"/>
<dbReference type="CTD" id="286527"/>
<dbReference type="DisGeNET" id="11013"/>
<dbReference type="DisGeNET" id="286527"/>
<dbReference type="GeneCards" id="TMSB15A"/>
<dbReference type="HGNC" id="HGNC:30744">
    <property type="gene designation" value="TMSB15A"/>
</dbReference>
<dbReference type="HPA" id="ENSG00000158164">
    <property type="expression patterns" value="Tissue enhanced (lymphoid tissue, ovary, prostate)"/>
</dbReference>
<dbReference type="MIM" id="300939">
    <property type="type" value="gene"/>
</dbReference>
<dbReference type="neXtProt" id="NX_P0CG34"/>
<dbReference type="OpenTargets" id="ENSG00000158164"/>
<dbReference type="OpenTargets" id="ENSG00000158427"/>
<dbReference type="OpenTargets" id="ENSG00000269226"/>
<dbReference type="PharmGKB" id="PA164726584"/>
<dbReference type="VEuPathDB" id="HostDB:ENSG00000158164"/>
<dbReference type="eggNOG" id="KOG4794">
    <property type="taxonomic scope" value="Eukaryota"/>
</dbReference>
<dbReference type="HOGENOM" id="CLU_208046_0_0_1"/>
<dbReference type="InParanoid" id="P0CG34"/>
<dbReference type="PAN-GO" id="P0CG34">
    <property type="GO annotations" value="4 GO annotations based on evolutionary models"/>
</dbReference>
<dbReference type="PhylomeDB" id="P0CG34"/>
<dbReference type="PathwayCommons" id="P0CG34"/>
<dbReference type="BioGRID-ORCS" id="11013">
    <property type="hits" value="46 hits in 629 CRISPR screens"/>
</dbReference>
<dbReference type="BioGRID-ORCS" id="286527">
    <property type="hits" value="16 hits in 286 CRISPR screens"/>
</dbReference>
<dbReference type="ChiTaRS" id="TMSB15A">
    <property type="organism name" value="human"/>
</dbReference>
<dbReference type="GeneWiki" id="TMSB15A"/>
<dbReference type="GeneWiki" id="TMSB15B"/>
<dbReference type="Pharos" id="P0CG34">
    <property type="development level" value="Tbio"/>
</dbReference>
<dbReference type="PRO" id="PR:P0CG34"/>
<dbReference type="Proteomes" id="UP000005640">
    <property type="component" value="Chromosome X"/>
</dbReference>
<dbReference type="Bgee" id="ENSG00000158164">
    <property type="expression patterns" value="Expressed in embryo and 130 other cell types or tissues"/>
</dbReference>
<dbReference type="GO" id="GO:0005737">
    <property type="term" value="C:cytoplasm"/>
    <property type="evidence" value="ECO:0000318"/>
    <property type="project" value="GO_Central"/>
</dbReference>
<dbReference type="GO" id="GO:0005856">
    <property type="term" value="C:cytoskeleton"/>
    <property type="evidence" value="ECO:0007669"/>
    <property type="project" value="UniProtKB-SubCell"/>
</dbReference>
<dbReference type="GO" id="GO:0003785">
    <property type="term" value="F:actin monomer binding"/>
    <property type="evidence" value="ECO:0000318"/>
    <property type="project" value="GO_Central"/>
</dbReference>
<dbReference type="GO" id="GO:0007015">
    <property type="term" value="P:actin filament organization"/>
    <property type="evidence" value="ECO:0007669"/>
    <property type="project" value="InterPro"/>
</dbReference>
<dbReference type="GO" id="GO:0030334">
    <property type="term" value="P:regulation of cell migration"/>
    <property type="evidence" value="ECO:0000318"/>
    <property type="project" value="GO_Central"/>
</dbReference>
<dbReference type="FunFam" id="1.20.5.520:FF:000001">
    <property type="entry name" value="Thymosin beta"/>
    <property type="match status" value="1"/>
</dbReference>
<dbReference type="Gene3D" id="1.20.5.520">
    <property type="entry name" value="Single helix bin"/>
    <property type="match status" value="1"/>
</dbReference>
<dbReference type="InterPro" id="IPR001152">
    <property type="entry name" value="Beta-thymosin"/>
</dbReference>
<dbReference type="InterPro" id="IPR038386">
    <property type="entry name" value="Beta-thymosin_sf"/>
</dbReference>
<dbReference type="PANTHER" id="PTHR12021">
    <property type="entry name" value="THYMOSIN BETA"/>
    <property type="match status" value="1"/>
</dbReference>
<dbReference type="PANTHER" id="PTHR12021:SF11">
    <property type="entry name" value="THYMOSIN BETA-15A-RELATED"/>
    <property type="match status" value="1"/>
</dbReference>
<dbReference type="Pfam" id="PF01290">
    <property type="entry name" value="Thymosin"/>
    <property type="match status" value="1"/>
</dbReference>
<dbReference type="PIRSF" id="PIRSF001828">
    <property type="entry name" value="Thymosin_beta"/>
    <property type="match status" value="1"/>
</dbReference>
<dbReference type="SMART" id="SM00152">
    <property type="entry name" value="THY"/>
    <property type="match status" value="1"/>
</dbReference>
<dbReference type="PROSITE" id="PS00500">
    <property type="entry name" value="THYMOSIN_B4"/>
    <property type="match status" value="1"/>
</dbReference>
<accession>P0CG34</accession>
<accession>A8K614</accession>
<accession>Q99406</accession>
<evidence type="ECO:0000250" key="1">
    <source>
        <dbReference type="UniProtKB" id="P62328"/>
    </source>
</evidence>
<evidence type="ECO:0000256" key="2">
    <source>
        <dbReference type="SAM" id="MobiDB-lite"/>
    </source>
</evidence>
<evidence type="ECO:0000269" key="3">
    <source>
    </source>
</evidence>
<evidence type="ECO:0000269" key="4">
    <source>
    </source>
</evidence>
<evidence type="ECO:0000269" key="5">
    <source>
    </source>
</evidence>
<evidence type="ECO:0000305" key="6"/>
<proteinExistence type="evidence at protein level"/>
<gene>
    <name type="primary">TMSB15A</name>
    <name type="synonym">TMSL8</name>
    <name type="synonym">TMSNB</name>
</gene>
<name>TB15A_HUMAN</name>